<keyword id="KW-0067">ATP-binding</keyword>
<keyword id="KW-0963">Cytoplasm</keyword>
<keyword id="KW-0227">DNA damage</keyword>
<keyword id="KW-0233">DNA recombination</keyword>
<keyword id="KW-0234">DNA repair</keyword>
<keyword id="KW-0238">DNA-binding</keyword>
<keyword id="KW-0378">Hydrolase</keyword>
<keyword id="KW-0547">Nucleotide-binding</keyword>
<keyword id="KW-1185">Reference proteome</keyword>
<dbReference type="EC" id="3.6.4.-" evidence="1"/>
<dbReference type="EMBL" id="CP001016">
    <property type="protein sequence ID" value="ACB93791.1"/>
    <property type="molecule type" value="Genomic_DNA"/>
</dbReference>
<dbReference type="RefSeq" id="WP_012383149.1">
    <property type="nucleotide sequence ID" value="NC_010581.1"/>
</dbReference>
<dbReference type="SMR" id="B2IBR9"/>
<dbReference type="STRING" id="395963.Bind_0133"/>
<dbReference type="KEGG" id="bid:Bind_0133"/>
<dbReference type="eggNOG" id="COG2255">
    <property type="taxonomic scope" value="Bacteria"/>
</dbReference>
<dbReference type="HOGENOM" id="CLU_055599_1_0_5"/>
<dbReference type="OrthoDB" id="9804478at2"/>
<dbReference type="Proteomes" id="UP000001695">
    <property type="component" value="Chromosome"/>
</dbReference>
<dbReference type="GO" id="GO:0005737">
    <property type="term" value="C:cytoplasm"/>
    <property type="evidence" value="ECO:0007669"/>
    <property type="project" value="UniProtKB-SubCell"/>
</dbReference>
<dbReference type="GO" id="GO:0048476">
    <property type="term" value="C:Holliday junction resolvase complex"/>
    <property type="evidence" value="ECO:0007669"/>
    <property type="project" value="UniProtKB-UniRule"/>
</dbReference>
<dbReference type="GO" id="GO:0005524">
    <property type="term" value="F:ATP binding"/>
    <property type="evidence" value="ECO:0007669"/>
    <property type="project" value="UniProtKB-UniRule"/>
</dbReference>
<dbReference type="GO" id="GO:0016887">
    <property type="term" value="F:ATP hydrolysis activity"/>
    <property type="evidence" value="ECO:0007669"/>
    <property type="project" value="InterPro"/>
</dbReference>
<dbReference type="GO" id="GO:0000400">
    <property type="term" value="F:four-way junction DNA binding"/>
    <property type="evidence" value="ECO:0007669"/>
    <property type="project" value="UniProtKB-UniRule"/>
</dbReference>
<dbReference type="GO" id="GO:0009378">
    <property type="term" value="F:four-way junction helicase activity"/>
    <property type="evidence" value="ECO:0007669"/>
    <property type="project" value="InterPro"/>
</dbReference>
<dbReference type="GO" id="GO:0006310">
    <property type="term" value="P:DNA recombination"/>
    <property type="evidence" value="ECO:0007669"/>
    <property type="project" value="UniProtKB-UniRule"/>
</dbReference>
<dbReference type="GO" id="GO:0006281">
    <property type="term" value="P:DNA repair"/>
    <property type="evidence" value="ECO:0007669"/>
    <property type="project" value="UniProtKB-UniRule"/>
</dbReference>
<dbReference type="CDD" id="cd00009">
    <property type="entry name" value="AAA"/>
    <property type="match status" value="1"/>
</dbReference>
<dbReference type="Gene3D" id="1.10.8.60">
    <property type="match status" value="1"/>
</dbReference>
<dbReference type="Gene3D" id="3.40.50.300">
    <property type="entry name" value="P-loop containing nucleotide triphosphate hydrolases"/>
    <property type="match status" value="1"/>
</dbReference>
<dbReference type="Gene3D" id="1.10.10.10">
    <property type="entry name" value="Winged helix-like DNA-binding domain superfamily/Winged helix DNA-binding domain"/>
    <property type="match status" value="1"/>
</dbReference>
<dbReference type="HAMAP" id="MF_00016">
    <property type="entry name" value="DNA_HJ_migration_RuvB"/>
    <property type="match status" value="1"/>
</dbReference>
<dbReference type="InterPro" id="IPR003593">
    <property type="entry name" value="AAA+_ATPase"/>
</dbReference>
<dbReference type="InterPro" id="IPR041445">
    <property type="entry name" value="AAA_lid_4"/>
</dbReference>
<dbReference type="InterPro" id="IPR000641">
    <property type="entry name" value="CbxX/CfxQ"/>
</dbReference>
<dbReference type="InterPro" id="IPR004605">
    <property type="entry name" value="DNA_helicase_Holl-junc_RuvB"/>
</dbReference>
<dbReference type="InterPro" id="IPR027417">
    <property type="entry name" value="P-loop_NTPase"/>
</dbReference>
<dbReference type="InterPro" id="IPR008824">
    <property type="entry name" value="RuvB-like_N"/>
</dbReference>
<dbReference type="InterPro" id="IPR008823">
    <property type="entry name" value="RuvB_C"/>
</dbReference>
<dbReference type="InterPro" id="IPR036388">
    <property type="entry name" value="WH-like_DNA-bd_sf"/>
</dbReference>
<dbReference type="InterPro" id="IPR036390">
    <property type="entry name" value="WH_DNA-bd_sf"/>
</dbReference>
<dbReference type="NCBIfam" id="NF000868">
    <property type="entry name" value="PRK00080.1"/>
    <property type="match status" value="1"/>
</dbReference>
<dbReference type="NCBIfam" id="TIGR00635">
    <property type="entry name" value="ruvB"/>
    <property type="match status" value="1"/>
</dbReference>
<dbReference type="PANTHER" id="PTHR42848">
    <property type="match status" value="1"/>
</dbReference>
<dbReference type="PANTHER" id="PTHR42848:SF1">
    <property type="entry name" value="HOLLIDAY JUNCTION BRANCH MIGRATION COMPLEX SUBUNIT RUVB"/>
    <property type="match status" value="1"/>
</dbReference>
<dbReference type="Pfam" id="PF17864">
    <property type="entry name" value="AAA_lid_4"/>
    <property type="match status" value="1"/>
</dbReference>
<dbReference type="Pfam" id="PF05491">
    <property type="entry name" value="RuvB_C"/>
    <property type="match status" value="1"/>
</dbReference>
<dbReference type="Pfam" id="PF05496">
    <property type="entry name" value="RuvB_N"/>
    <property type="match status" value="1"/>
</dbReference>
<dbReference type="PRINTS" id="PR00819">
    <property type="entry name" value="CBXCFQXSUPER"/>
</dbReference>
<dbReference type="SMART" id="SM00382">
    <property type="entry name" value="AAA"/>
    <property type="match status" value="1"/>
</dbReference>
<dbReference type="SUPFAM" id="SSF52540">
    <property type="entry name" value="P-loop containing nucleoside triphosphate hydrolases"/>
    <property type="match status" value="1"/>
</dbReference>
<dbReference type="SUPFAM" id="SSF46785">
    <property type="entry name" value="Winged helix' DNA-binding domain"/>
    <property type="match status" value="1"/>
</dbReference>
<organism>
    <name type="scientific">Beijerinckia indica subsp. indica (strain ATCC 9039 / DSM 1715 / NCIMB 8712)</name>
    <dbReference type="NCBI Taxonomy" id="395963"/>
    <lineage>
        <taxon>Bacteria</taxon>
        <taxon>Pseudomonadati</taxon>
        <taxon>Pseudomonadota</taxon>
        <taxon>Alphaproteobacteria</taxon>
        <taxon>Hyphomicrobiales</taxon>
        <taxon>Beijerinckiaceae</taxon>
        <taxon>Beijerinckia</taxon>
    </lineage>
</organism>
<feature type="chain" id="PRO_1000195203" description="Holliday junction branch migration complex subunit RuvB">
    <location>
        <begin position="1"/>
        <end position="350"/>
    </location>
</feature>
<feature type="region of interest" description="Large ATPase domain (RuvB-L)" evidence="1">
    <location>
        <begin position="1"/>
        <end position="184"/>
    </location>
</feature>
<feature type="region of interest" description="Small ATPAse domain (RuvB-S)" evidence="1">
    <location>
        <begin position="185"/>
        <end position="255"/>
    </location>
</feature>
<feature type="region of interest" description="Head domain (RuvB-H)" evidence="1">
    <location>
        <begin position="258"/>
        <end position="350"/>
    </location>
</feature>
<feature type="binding site" evidence="1">
    <location>
        <position position="23"/>
    </location>
    <ligand>
        <name>ATP</name>
        <dbReference type="ChEBI" id="CHEBI:30616"/>
    </ligand>
</feature>
<feature type="binding site" evidence="1">
    <location>
        <position position="24"/>
    </location>
    <ligand>
        <name>ATP</name>
        <dbReference type="ChEBI" id="CHEBI:30616"/>
    </ligand>
</feature>
<feature type="binding site" evidence="1">
    <location>
        <position position="65"/>
    </location>
    <ligand>
        <name>ATP</name>
        <dbReference type="ChEBI" id="CHEBI:30616"/>
    </ligand>
</feature>
<feature type="binding site" evidence="1">
    <location>
        <position position="68"/>
    </location>
    <ligand>
        <name>ATP</name>
        <dbReference type="ChEBI" id="CHEBI:30616"/>
    </ligand>
</feature>
<feature type="binding site" evidence="1">
    <location>
        <position position="69"/>
    </location>
    <ligand>
        <name>ATP</name>
        <dbReference type="ChEBI" id="CHEBI:30616"/>
    </ligand>
</feature>
<feature type="binding site" evidence="1">
    <location>
        <position position="69"/>
    </location>
    <ligand>
        <name>Mg(2+)</name>
        <dbReference type="ChEBI" id="CHEBI:18420"/>
    </ligand>
</feature>
<feature type="binding site" evidence="1">
    <location>
        <position position="70"/>
    </location>
    <ligand>
        <name>ATP</name>
        <dbReference type="ChEBI" id="CHEBI:30616"/>
    </ligand>
</feature>
<feature type="binding site" evidence="1">
    <location>
        <begin position="131"/>
        <end position="133"/>
    </location>
    <ligand>
        <name>ATP</name>
        <dbReference type="ChEBI" id="CHEBI:30616"/>
    </ligand>
</feature>
<feature type="binding site" evidence="1">
    <location>
        <position position="174"/>
    </location>
    <ligand>
        <name>ATP</name>
        <dbReference type="ChEBI" id="CHEBI:30616"/>
    </ligand>
</feature>
<feature type="binding site" evidence="1">
    <location>
        <position position="184"/>
    </location>
    <ligand>
        <name>ATP</name>
        <dbReference type="ChEBI" id="CHEBI:30616"/>
    </ligand>
</feature>
<feature type="binding site" evidence="1">
    <location>
        <position position="221"/>
    </location>
    <ligand>
        <name>ATP</name>
        <dbReference type="ChEBI" id="CHEBI:30616"/>
    </ligand>
</feature>
<feature type="binding site" evidence="1">
    <location>
        <position position="294"/>
    </location>
    <ligand>
        <name>DNA</name>
        <dbReference type="ChEBI" id="CHEBI:16991"/>
    </ligand>
</feature>
<feature type="binding site" evidence="1">
    <location>
        <position position="313"/>
    </location>
    <ligand>
        <name>DNA</name>
        <dbReference type="ChEBI" id="CHEBI:16991"/>
    </ligand>
</feature>
<feature type="binding site" evidence="1">
    <location>
        <position position="318"/>
    </location>
    <ligand>
        <name>DNA</name>
        <dbReference type="ChEBI" id="CHEBI:16991"/>
    </ligand>
</feature>
<name>RUVB_BEII9</name>
<proteinExistence type="inferred from homology"/>
<reference key="1">
    <citation type="journal article" date="2010" name="J. Bacteriol.">
        <title>Complete genome sequence of Beijerinckia indica subsp. indica.</title>
        <authorList>
            <person name="Tamas I."/>
            <person name="Dedysh S.N."/>
            <person name="Liesack W."/>
            <person name="Stott M.B."/>
            <person name="Alam M."/>
            <person name="Murrell J.C."/>
            <person name="Dunfield P.F."/>
        </authorList>
    </citation>
    <scope>NUCLEOTIDE SEQUENCE [LARGE SCALE GENOMIC DNA]</scope>
    <source>
        <strain>ATCC 9039 / DSM 1715 / NCIMB 8712</strain>
    </source>
</reference>
<accession>B2IBR9</accession>
<comment type="function">
    <text evidence="1">The RuvA-RuvB-RuvC complex processes Holliday junction (HJ) DNA during genetic recombination and DNA repair, while the RuvA-RuvB complex plays an important role in the rescue of blocked DNA replication forks via replication fork reversal (RFR). RuvA specifically binds to HJ cruciform DNA, conferring on it an open structure. The RuvB hexamer acts as an ATP-dependent pump, pulling dsDNA into and through the RuvAB complex. RuvB forms 2 homohexamers on either side of HJ DNA bound by 1 or 2 RuvA tetramers; 4 subunits per hexamer contact DNA at a time. Coordinated motions by a converter formed by DNA-disengaged RuvB subunits stimulates ATP hydrolysis and nucleotide exchange. Immobilization of the converter enables RuvB to convert the ATP-contained energy into a lever motion, pulling 2 nucleotides of DNA out of the RuvA tetramer per ATP hydrolyzed, thus driving DNA branch migration. The RuvB motors rotate together with the DNA substrate, which together with the progressing nucleotide cycle form the mechanistic basis for DNA recombination by continuous HJ branch migration. Branch migration allows RuvC to scan DNA until it finds its consensus sequence, where it cleaves and resolves cruciform DNA.</text>
</comment>
<comment type="catalytic activity">
    <reaction evidence="1">
        <text>ATP + H2O = ADP + phosphate + H(+)</text>
        <dbReference type="Rhea" id="RHEA:13065"/>
        <dbReference type="ChEBI" id="CHEBI:15377"/>
        <dbReference type="ChEBI" id="CHEBI:15378"/>
        <dbReference type="ChEBI" id="CHEBI:30616"/>
        <dbReference type="ChEBI" id="CHEBI:43474"/>
        <dbReference type="ChEBI" id="CHEBI:456216"/>
    </reaction>
</comment>
<comment type="subunit">
    <text evidence="1">Homohexamer. Forms an RuvA(8)-RuvB(12)-Holliday junction (HJ) complex. HJ DNA is sandwiched between 2 RuvA tetramers; dsDNA enters through RuvA and exits via RuvB. An RuvB hexamer assembles on each DNA strand where it exits the tetramer. Each RuvB hexamer is contacted by two RuvA subunits (via domain III) on 2 adjacent RuvB subunits; this complex drives branch migration. In the full resolvosome a probable DNA-RuvA(4)-RuvB(12)-RuvC(2) complex forms which resolves the HJ.</text>
</comment>
<comment type="subcellular location">
    <subcellularLocation>
        <location evidence="1">Cytoplasm</location>
    </subcellularLocation>
</comment>
<comment type="domain">
    <text evidence="1">Has 3 domains, the large (RuvB-L) and small ATPase (RuvB-S) domains and the C-terminal head (RuvB-H) domain. The head domain binds DNA, while the ATPase domains jointly bind ATP, ADP or are empty depending on the state of the subunit in the translocation cycle. During a single DNA translocation step the structure of each domain remains the same, but their relative positions change.</text>
</comment>
<comment type="similarity">
    <text evidence="1">Belongs to the RuvB family.</text>
</comment>
<gene>
    <name evidence="1" type="primary">ruvB</name>
    <name type="ordered locus">Bind_0133</name>
</gene>
<protein>
    <recommendedName>
        <fullName evidence="1">Holliday junction branch migration complex subunit RuvB</fullName>
        <ecNumber evidence="1">3.6.4.-</ecNumber>
    </recommendedName>
</protein>
<sequence>MSKTPERLVTSEVRDEDMTEASLRPLTLADFTGQAAARQNLSVFIAAAKARREALDHVLFVGPPGLGKTTLAQIVARELGVNFRSTSGPVIAKAGDLAAQLTALEERDVLFIDEIHRLNPAVEEILYPAMEDFQLDLIIGEGPGARSVKIDLARFTLVGATTRAGLLTTPLRDRFGIPIRLEFYTIEELERIVLRGARVQGLALEKEGANEIAKRARGTPRIAGRLLRRVRDFAIVDGVESVTRTLADKALSLLDVDPIGLDQMDRRYLNVIALSFGGGPVGIETIAAALSEPRDAIEDIIEPYLIQQGFLQRTPRGRLLTPHAFRHLGLKEPVRETPQYGLFPDQSEED</sequence>
<evidence type="ECO:0000255" key="1">
    <source>
        <dbReference type="HAMAP-Rule" id="MF_00016"/>
    </source>
</evidence>